<protein>
    <recommendedName>
        <fullName>UDP-N-acetylglucosamine transferase subunit ALG13</fullName>
        <ecNumber>2.4.1.141</ecNumber>
    </recommendedName>
    <alternativeName>
        <fullName>Asparagine-linked glycosylation protein 13</fullName>
    </alternativeName>
</protein>
<proteinExistence type="inferred from homology"/>
<comment type="function">
    <text evidence="1">Involved in protein N-glycosylation. Essential for the second step of the dolichol-linked oligosaccharide pathway (By similarity).</text>
</comment>
<comment type="catalytic activity">
    <reaction>
        <text>an N-acetyl-alpha-D-glucosaminyl-diphospho-di-trans,poly-cis-dolichol + UDP-N-acetyl-alpha-D-glucosamine = an N,N'-diacetylchitobiosyl-diphospho-di-trans,poly-cis-dolichol + UDP + H(+)</text>
        <dbReference type="Rhea" id="RHEA:23380"/>
        <dbReference type="Rhea" id="RHEA-COMP:19507"/>
        <dbReference type="Rhea" id="RHEA-COMP:19510"/>
        <dbReference type="ChEBI" id="CHEBI:15378"/>
        <dbReference type="ChEBI" id="CHEBI:57269"/>
        <dbReference type="ChEBI" id="CHEBI:57705"/>
        <dbReference type="ChEBI" id="CHEBI:58223"/>
        <dbReference type="ChEBI" id="CHEBI:58427"/>
        <dbReference type="EC" id="2.4.1.141"/>
    </reaction>
</comment>
<comment type="subunit">
    <text evidence="1">Heterodimer with ALG14 to form a functional enzyme.</text>
</comment>
<comment type="subcellular location">
    <subcellularLocation>
        <location evidence="1">Endoplasmic reticulum</location>
    </subcellularLocation>
</comment>
<comment type="similarity">
    <text evidence="2">Belongs to the glycosyltransferase 28 family.</text>
</comment>
<feature type="chain" id="PRO_0000215600" description="UDP-N-acetylglucosamine transferase subunit ALG13">
    <location>
        <begin position="1"/>
        <end position="200"/>
    </location>
</feature>
<sequence length="200" mass="22241">MAHPFTLLVTVGSTLFPSLTSHVLLPTFLSLLQSLGVQRLVVQYGRAELKLQDDVKQTLNIDSQGDGIGVWSDNDGDRVRDEKQNGMVVEVMRFTNDFEGLVGKSDAVISHAGSGSILTVLRRAPPIPLLVVPNRSLMDDHQSELADALYKDGYVMVASVEDLEEKVQPFLKIWPSQAKLFPETRKEVFREVVDDLMGYD</sequence>
<name>ALG13_CRYNJ</name>
<dbReference type="EC" id="2.4.1.141"/>
<dbReference type="EMBL" id="AE017342">
    <property type="protein sequence ID" value="AAW41985.2"/>
    <property type="molecule type" value="Genomic_DNA"/>
</dbReference>
<dbReference type="RefSeq" id="XP_569292.1">
    <property type="nucleotide sequence ID" value="XM_569292.1"/>
</dbReference>
<dbReference type="SMR" id="P0CN88"/>
<dbReference type="FunCoup" id="P0CN88">
    <property type="interactions" value="108"/>
</dbReference>
<dbReference type="STRING" id="214684.P0CN88"/>
<dbReference type="PaxDb" id="214684-P0CN88"/>
<dbReference type="EnsemblFungi" id="AAW41985">
    <property type="protein sequence ID" value="AAW41985"/>
    <property type="gene ID" value="CNB05490"/>
</dbReference>
<dbReference type="VEuPathDB" id="FungiDB:CNB05490"/>
<dbReference type="eggNOG" id="KOG3349">
    <property type="taxonomic scope" value="Eukaryota"/>
</dbReference>
<dbReference type="InParanoid" id="P0CN88"/>
<dbReference type="OrthoDB" id="20273at2759"/>
<dbReference type="Proteomes" id="UP000002149">
    <property type="component" value="Chromosome 2"/>
</dbReference>
<dbReference type="GO" id="GO:0005783">
    <property type="term" value="C:endoplasmic reticulum"/>
    <property type="evidence" value="ECO:0007669"/>
    <property type="project" value="UniProtKB-SubCell"/>
</dbReference>
<dbReference type="GO" id="GO:0004577">
    <property type="term" value="F:N-acetylglucosaminyldiphosphodolichol N-acetylglucosaminyltransferase activity"/>
    <property type="evidence" value="ECO:0007669"/>
    <property type="project" value="UniProtKB-EC"/>
</dbReference>
<dbReference type="GO" id="GO:0006488">
    <property type="term" value="P:dolichol-linked oligosaccharide biosynthetic process"/>
    <property type="evidence" value="ECO:0007669"/>
    <property type="project" value="InterPro"/>
</dbReference>
<dbReference type="Gene3D" id="3.40.50.2000">
    <property type="entry name" value="Glycogen Phosphorylase B"/>
    <property type="match status" value="1"/>
</dbReference>
<dbReference type="InterPro" id="IPR039042">
    <property type="entry name" value="Alg13-like"/>
</dbReference>
<dbReference type="InterPro" id="IPR007235">
    <property type="entry name" value="Glyco_trans_28_C"/>
</dbReference>
<dbReference type="PANTHER" id="PTHR12867">
    <property type="entry name" value="GLYCOSYL TRANSFERASE-RELATED"/>
    <property type="match status" value="1"/>
</dbReference>
<dbReference type="PANTHER" id="PTHR12867:SF6">
    <property type="entry name" value="N-ACETYLGLUCOSAMINYLDIPHOSPHODOLICHOL N-ACETYLGLUCOSAMINYLTRANSFERASE"/>
    <property type="match status" value="1"/>
</dbReference>
<dbReference type="Pfam" id="PF04101">
    <property type="entry name" value="Glyco_tran_28_C"/>
    <property type="match status" value="1"/>
</dbReference>
<dbReference type="SUPFAM" id="SSF53756">
    <property type="entry name" value="UDP-Glycosyltransferase/glycogen phosphorylase"/>
    <property type="match status" value="1"/>
</dbReference>
<keyword id="KW-0256">Endoplasmic reticulum</keyword>
<keyword id="KW-0328">Glycosyltransferase</keyword>
<keyword id="KW-1185">Reference proteome</keyword>
<keyword id="KW-0808">Transferase</keyword>
<reference key="1">
    <citation type="journal article" date="2005" name="Science">
        <title>The genome of the basidiomycetous yeast and human pathogen Cryptococcus neoformans.</title>
        <authorList>
            <person name="Loftus B.J."/>
            <person name="Fung E."/>
            <person name="Roncaglia P."/>
            <person name="Rowley D."/>
            <person name="Amedeo P."/>
            <person name="Bruno D."/>
            <person name="Vamathevan J."/>
            <person name="Miranda M."/>
            <person name="Anderson I.J."/>
            <person name="Fraser J.A."/>
            <person name="Allen J.E."/>
            <person name="Bosdet I.E."/>
            <person name="Brent M.R."/>
            <person name="Chiu R."/>
            <person name="Doering T.L."/>
            <person name="Donlin M.J."/>
            <person name="D'Souza C.A."/>
            <person name="Fox D.S."/>
            <person name="Grinberg V."/>
            <person name="Fu J."/>
            <person name="Fukushima M."/>
            <person name="Haas B.J."/>
            <person name="Huang J.C."/>
            <person name="Janbon G."/>
            <person name="Jones S.J.M."/>
            <person name="Koo H.L."/>
            <person name="Krzywinski M.I."/>
            <person name="Kwon-Chung K.J."/>
            <person name="Lengeler K.B."/>
            <person name="Maiti R."/>
            <person name="Marra M.A."/>
            <person name="Marra R.E."/>
            <person name="Mathewson C.A."/>
            <person name="Mitchell T.G."/>
            <person name="Pertea M."/>
            <person name="Riggs F.R."/>
            <person name="Salzberg S.L."/>
            <person name="Schein J.E."/>
            <person name="Shvartsbeyn A."/>
            <person name="Shin H."/>
            <person name="Shumway M."/>
            <person name="Specht C.A."/>
            <person name="Suh B.B."/>
            <person name="Tenney A."/>
            <person name="Utterback T.R."/>
            <person name="Wickes B.L."/>
            <person name="Wortman J.R."/>
            <person name="Wye N.H."/>
            <person name="Kronstad J.W."/>
            <person name="Lodge J.K."/>
            <person name="Heitman J."/>
            <person name="Davis R.W."/>
            <person name="Fraser C.M."/>
            <person name="Hyman R.W."/>
        </authorList>
    </citation>
    <scope>NUCLEOTIDE SEQUENCE [LARGE SCALE GENOMIC DNA]</scope>
    <source>
        <strain>JEC21 / ATCC MYA-565</strain>
    </source>
</reference>
<gene>
    <name type="primary">ALG13</name>
    <name type="ordered locus">CNB05490</name>
</gene>
<accession>P0CN88</accession>
<accession>Q55YI6</accession>
<accession>Q5KLF2</accession>
<organism>
    <name type="scientific">Cryptococcus neoformans var. neoformans serotype D (strain JEC21 / ATCC MYA-565)</name>
    <name type="common">Filobasidiella neoformans</name>
    <dbReference type="NCBI Taxonomy" id="214684"/>
    <lineage>
        <taxon>Eukaryota</taxon>
        <taxon>Fungi</taxon>
        <taxon>Dikarya</taxon>
        <taxon>Basidiomycota</taxon>
        <taxon>Agaricomycotina</taxon>
        <taxon>Tremellomycetes</taxon>
        <taxon>Tremellales</taxon>
        <taxon>Cryptococcaceae</taxon>
        <taxon>Cryptococcus</taxon>
        <taxon>Cryptococcus neoformans species complex</taxon>
    </lineage>
</organism>
<evidence type="ECO:0000250" key="1"/>
<evidence type="ECO:0000305" key="2"/>